<name>MSRP_ERWT9</name>
<organism>
    <name type="scientific">Erwinia tasmaniensis (strain DSM 17950 / CFBP 7177 / CIP 109463 / NCPPB 4357 / Et1/99)</name>
    <dbReference type="NCBI Taxonomy" id="465817"/>
    <lineage>
        <taxon>Bacteria</taxon>
        <taxon>Pseudomonadati</taxon>
        <taxon>Pseudomonadota</taxon>
        <taxon>Gammaproteobacteria</taxon>
        <taxon>Enterobacterales</taxon>
        <taxon>Erwiniaceae</taxon>
        <taxon>Erwinia</taxon>
    </lineage>
</organism>
<reference key="1">
    <citation type="journal article" date="2008" name="Environ. Microbiol.">
        <title>The genome of Erwinia tasmaniensis strain Et1/99, a non-pathogenic bacterium in the genus Erwinia.</title>
        <authorList>
            <person name="Kube M."/>
            <person name="Migdoll A.M."/>
            <person name="Mueller I."/>
            <person name="Kuhl H."/>
            <person name="Beck A."/>
            <person name="Reinhardt R."/>
            <person name="Geider K."/>
        </authorList>
    </citation>
    <scope>NUCLEOTIDE SEQUENCE [LARGE SCALE GENOMIC DNA]</scope>
    <source>
        <strain>DSM 17950 / CFBP 7177 / CIP 109463 / NCPPB 4357 / Et1/99</strain>
    </source>
</reference>
<protein>
    <recommendedName>
        <fullName evidence="1">Protein-methionine-sulfoxide reductase catalytic subunit MsrP</fullName>
        <ecNumber evidence="1">1.8.5.-</ecNumber>
    </recommendedName>
</protein>
<proteinExistence type="inferred from homology"/>
<sequence length="334" mass="37222">MKAVNPLTENDVTPESLFNARRRTVLKMLGMSAAALSLPGAARADLLSWFKGGDRPRAASGRPLDFSQPQQFQANLPLTPEDKVTGYNNFYEFGLDKADPAAHAGTLKTADWKIEIDGEVAKPLTLSMDDIFKRFAQEQRIYRMRCVEGWSMVVPWVGFELGKLLQAAEPTSNARFVAFHTLYAPDQMPGQQDRFIGGGLDYPYVEGLRLDEAMHPLTLLTTGVYGKALPPQNGAPIRLTVPWKYGFKGIKSIVKISLVKAMPPTTWNQLAPNEYGFYANVNPHVDHPRWSQATERFIGSGGILDVQRQPTLLFNGYADQVASLYRGLDLRENF</sequence>
<accession>B2VGX7</accession>
<keyword id="KW-0479">Metal-binding</keyword>
<keyword id="KW-0500">Molybdenum</keyword>
<keyword id="KW-0560">Oxidoreductase</keyword>
<keyword id="KW-0574">Periplasm</keyword>
<keyword id="KW-1185">Reference proteome</keyword>
<keyword id="KW-0732">Signal</keyword>
<feature type="signal peptide" description="Tat-type signal" evidence="1">
    <location>
        <begin position="1"/>
        <end position="44"/>
    </location>
</feature>
<feature type="chain" id="PRO_1000138716" description="Protein-methionine-sulfoxide reductase catalytic subunit MsrP" evidence="1">
    <location>
        <begin position="45"/>
        <end position="334"/>
    </location>
</feature>
<feature type="binding site" evidence="1">
    <location>
        <position position="88"/>
    </location>
    <ligand>
        <name>Mo-molybdopterin</name>
        <dbReference type="ChEBI" id="CHEBI:71302"/>
    </ligand>
</feature>
<feature type="binding site" evidence="1">
    <location>
        <begin position="91"/>
        <end position="92"/>
    </location>
    <ligand>
        <name>Mo-molybdopterin</name>
        <dbReference type="ChEBI" id="CHEBI:71302"/>
    </ligand>
</feature>
<feature type="binding site" evidence="1">
    <location>
        <position position="146"/>
    </location>
    <ligand>
        <name>Mo-molybdopterin</name>
        <dbReference type="ChEBI" id="CHEBI:71302"/>
    </ligand>
    <ligandPart>
        <name>Mo</name>
        <dbReference type="ChEBI" id="CHEBI:28685"/>
    </ligandPart>
</feature>
<feature type="binding site" evidence="1">
    <location>
        <position position="181"/>
    </location>
    <ligand>
        <name>Mo-molybdopterin</name>
        <dbReference type="ChEBI" id="CHEBI:71302"/>
    </ligand>
</feature>
<feature type="binding site" evidence="1">
    <location>
        <position position="233"/>
    </location>
    <ligand>
        <name>Mo-molybdopterin</name>
        <dbReference type="ChEBI" id="CHEBI:71302"/>
    </ligand>
</feature>
<feature type="binding site" evidence="1">
    <location>
        <position position="238"/>
    </location>
    <ligand>
        <name>Mo-molybdopterin</name>
        <dbReference type="ChEBI" id="CHEBI:71302"/>
    </ligand>
</feature>
<feature type="binding site" evidence="1">
    <location>
        <begin position="249"/>
        <end position="251"/>
    </location>
    <ligand>
        <name>Mo-molybdopterin</name>
        <dbReference type="ChEBI" id="CHEBI:71302"/>
    </ligand>
</feature>
<evidence type="ECO:0000255" key="1">
    <source>
        <dbReference type="HAMAP-Rule" id="MF_01206"/>
    </source>
</evidence>
<comment type="function">
    <text evidence="1">Part of the MsrPQ system that repairs oxidized periplasmic proteins containing methionine sulfoxide residues (Met-O), using respiratory chain electrons. Thus protects these proteins from oxidative-stress damage caused by reactive species of oxygen and chlorine generated by the host defense mechanisms. MsrPQ is essential for the maintenance of envelope integrity under bleach stress, rescuing a wide series of structurally unrelated periplasmic proteins from methionine oxidation. The catalytic subunit MsrP is non-stereospecific, being able to reduce both (R-) and (S-) diastereoisomers of methionine sulfoxide.</text>
</comment>
<comment type="catalytic activity">
    <reaction evidence="1">
        <text>L-methionyl-[protein] + a quinone + H2O = L-methionyl-(S)-S-oxide-[protein] + a quinol</text>
        <dbReference type="Rhea" id="RHEA:51292"/>
        <dbReference type="Rhea" id="RHEA-COMP:12313"/>
        <dbReference type="Rhea" id="RHEA-COMP:12315"/>
        <dbReference type="ChEBI" id="CHEBI:15377"/>
        <dbReference type="ChEBI" id="CHEBI:16044"/>
        <dbReference type="ChEBI" id="CHEBI:24646"/>
        <dbReference type="ChEBI" id="CHEBI:44120"/>
        <dbReference type="ChEBI" id="CHEBI:132124"/>
    </reaction>
</comment>
<comment type="catalytic activity">
    <reaction evidence="1">
        <text>L-methionyl-[protein] + a quinone + H2O = L-methionyl-(R)-S-oxide-[protein] + a quinol</text>
        <dbReference type="Rhea" id="RHEA:51296"/>
        <dbReference type="Rhea" id="RHEA-COMP:12313"/>
        <dbReference type="Rhea" id="RHEA-COMP:12314"/>
        <dbReference type="ChEBI" id="CHEBI:15377"/>
        <dbReference type="ChEBI" id="CHEBI:16044"/>
        <dbReference type="ChEBI" id="CHEBI:24646"/>
        <dbReference type="ChEBI" id="CHEBI:45764"/>
        <dbReference type="ChEBI" id="CHEBI:132124"/>
    </reaction>
</comment>
<comment type="cofactor">
    <cofactor evidence="1">
        <name>Mo-molybdopterin</name>
        <dbReference type="ChEBI" id="CHEBI:71302"/>
    </cofactor>
    <text evidence="1">Binds 1 Mo-molybdopterin (Mo-MPT) cofactor per subunit.</text>
</comment>
<comment type="subunit">
    <text evidence="1">Heterodimer of a catalytic subunit (MsrP) and a heme-binding subunit (MsrQ).</text>
</comment>
<comment type="subcellular location">
    <subcellularLocation>
        <location evidence="1">Periplasm</location>
    </subcellularLocation>
    <text evidence="1">Is attached to the inner membrane when interacting with the MsrQ subunit.</text>
</comment>
<comment type="PTM">
    <text evidence="1">Predicted to be exported by the Tat system. The position of the signal peptide cleavage has not been experimentally proven.</text>
</comment>
<comment type="similarity">
    <text evidence="1">Belongs to the MsrP family.</text>
</comment>
<gene>
    <name evidence="1" type="primary">msrP</name>
    <name type="ordered locus">ETA_02810</name>
</gene>
<dbReference type="EC" id="1.8.5.-" evidence="1"/>
<dbReference type="EMBL" id="CU468135">
    <property type="protein sequence ID" value="CAO95327.1"/>
    <property type="molecule type" value="Genomic_DNA"/>
</dbReference>
<dbReference type="RefSeq" id="WP_012440046.1">
    <property type="nucleotide sequence ID" value="NC_010694.1"/>
</dbReference>
<dbReference type="SMR" id="B2VGX7"/>
<dbReference type="STRING" id="465817.ETA_02810"/>
<dbReference type="KEGG" id="eta:ETA_02810"/>
<dbReference type="eggNOG" id="COG2041">
    <property type="taxonomic scope" value="Bacteria"/>
</dbReference>
<dbReference type="HOGENOM" id="CLU_045520_0_0_6"/>
<dbReference type="OrthoDB" id="9795587at2"/>
<dbReference type="Proteomes" id="UP000001726">
    <property type="component" value="Chromosome"/>
</dbReference>
<dbReference type="GO" id="GO:0042597">
    <property type="term" value="C:periplasmic space"/>
    <property type="evidence" value="ECO:0007669"/>
    <property type="project" value="UniProtKB-SubCell"/>
</dbReference>
<dbReference type="GO" id="GO:0046872">
    <property type="term" value="F:metal ion binding"/>
    <property type="evidence" value="ECO:0007669"/>
    <property type="project" value="UniProtKB-KW"/>
</dbReference>
<dbReference type="GO" id="GO:0043546">
    <property type="term" value="F:molybdopterin cofactor binding"/>
    <property type="evidence" value="ECO:0007669"/>
    <property type="project" value="UniProtKB-UniRule"/>
</dbReference>
<dbReference type="GO" id="GO:0016672">
    <property type="term" value="F:oxidoreductase activity, acting on a sulfur group of donors, quinone or similar compound as acceptor"/>
    <property type="evidence" value="ECO:0007669"/>
    <property type="project" value="UniProtKB-UniRule"/>
</dbReference>
<dbReference type="GO" id="GO:0030091">
    <property type="term" value="P:protein repair"/>
    <property type="evidence" value="ECO:0007669"/>
    <property type="project" value="UniProtKB-UniRule"/>
</dbReference>
<dbReference type="CDD" id="cd02107">
    <property type="entry name" value="YedY_like_Moco"/>
    <property type="match status" value="1"/>
</dbReference>
<dbReference type="Gene3D" id="3.90.420.10">
    <property type="entry name" value="Oxidoreductase, molybdopterin-binding domain"/>
    <property type="match status" value="1"/>
</dbReference>
<dbReference type="HAMAP" id="MF_01206">
    <property type="entry name" value="MsrP"/>
    <property type="match status" value="1"/>
</dbReference>
<dbReference type="InterPro" id="IPR022867">
    <property type="entry name" value="MsrP"/>
</dbReference>
<dbReference type="InterPro" id="IPR000572">
    <property type="entry name" value="OxRdtase_Mopterin-bd_dom"/>
</dbReference>
<dbReference type="InterPro" id="IPR036374">
    <property type="entry name" value="OxRdtase_Mopterin-bd_sf"/>
</dbReference>
<dbReference type="InterPro" id="IPR006311">
    <property type="entry name" value="TAT_signal"/>
</dbReference>
<dbReference type="NCBIfam" id="NF003767">
    <property type="entry name" value="PRK05363.1"/>
    <property type="match status" value="1"/>
</dbReference>
<dbReference type="PANTHER" id="PTHR43032">
    <property type="entry name" value="PROTEIN-METHIONINE-SULFOXIDE REDUCTASE"/>
    <property type="match status" value="1"/>
</dbReference>
<dbReference type="PANTHER" id="PTHR43032:SF3">
    <property type="entry name" value="PROTEIN-METHIONINE-SULFOXIDE REDUCTASE CATALYTIC SUBUNIT MSRP"/>
    <property type="match status" value="1"/>
</dbReference>
<dbReference type="Pfam" id="PF00174">
    <property type="entry name" value="Oxidored_molyb"/>
    <property type="match status" value="1"/>
</dbReference>
<dbReference type="SUPFAM" id="SSF56524">
    <property type="entry name" value="Oxidoreductase molybdopterin-binding domain"/>
    <property type="match status" value="1"/>
</dbReference>
<dbReference type="PROSITE" id="PS51318">
    <property type="entry name" value="TAT"/>
    <property type="match status" value="1"/>
</dbReference>